<sequence length="397" mass="41029">MNVIRFSDLCAQGQVSGKRVFIRADLNVPQDDAGHITEDTRIRASIPCIQMALDAGAAVMVTSHLGRPTEGAFKPEDSLAPVAQRLAELMGRAVPLIANWVDGVSVQPGQLVLLENCRVNPGEKKNNEALARKMAALCDIFVHDAFGTAHRAEASTYGIAQFAKVACAGPLLAAEMDAISKALANPKRPLVAIVAGSKVSTKLTILKSLASKVDQLIVGGGIANTFMLAAGLKIGKSLAEPDLLEDARAVIAAMKARGAAVPIPTDVVTAKTFAADAVATVKAATDVADDDLILDIGPQTAAALATQLKAAGTIVWNGPVGVFEFPAFENGTQTIAHAIAESSAFSIAGGGDTLAAIAKYGIEKQIGYISTGGGAFLEVLEGKTLPAFEILTRRAAG</sequence>
<organism>
    <name type="scientific">Albidiferax ferrireducens (strain ATCC BAA-621 / DSM 15236 / T118)</name>
    <name type="common">Rhodoferax ferrireducens</name>
    <dbReference type="NCBI Taxonomy" id="338969"/>
    <lineage>
        <taxon>Bacteria</taxon>
        <taxon>Pseudomonadati</taxon>
        <taxon>Pseudomonadota</taxon>
        <taxon>Betaproteobacteria</taxon>
        <taxon>Burkholderiales</taxon>
        <taxon>Comamonadaceae</taxon>
        <taxon>Rhodoferax</taxon>
    </lineage>
</organism>
<keyword id="KW-0067">ATP-binding</keyword>
<keyword id="KW-0963">Cytoplasm</keyword>
<keyword id="KW-0324">Glycolysis</keyword>
<keyword id="KW-0418">Kinase</keyword>
<keyword id="KW-0547">Nucleotide-binding</keyword>
<keyword id="KW-1185">Reference proteome</keyword>
<keyword id="KW-0808">Transferase</keyword>
<reference key="1">
    <citation type="submission" date="2006-02" db="EMBL/GenBank/DDBJ databases">
        <title>Complete sequence of chromosome of Rhodoferax ferrireducens DSM 15236.</title>
        <authorList>
            <person name="Copeland A."/>
            <person name="Lucas S."/>
            <person name="Lapidus A."/>
            <person name="Barry K."/>
            <person name="Detter J.C."/>
            <person name="Glavina del Rio T."/>
            <person name="Hammon N."/>
            <person name="Israni S."/>
            <person name="Pitluck S."/>
            <person name="Brettin T."/>
            <person name="Bruce D."/>
            <person name="Han C."/>
            <person name="Tapia R."/>
            <person name="Gilna P."/>
            <person name="Kiss H."/>
            <person name="Schmutz J."/>
            <person name="Larimer F."/>
            <person name="Land M."/>
            <person name="Kyrpides N."/>
            <person name="Ivanova N."/>
            <person name="Richardson P."/>
        </authorList>
    </citation>
    <scope>NUCLEOTIDE SEQUENCE [LARGE SCALE GENOMIC DNA]</scope>
    <source>
        <strain>ATCC BAA-621 / DSM 15236 / T118</strain>
    </source>
</reference>
<name>PGK_ALBFT</name>
<gene>
    <name evidence="1" type="primary">pgk</name>
    <name type="ordered locus">Rfer_3690</name>
</gene>
<feature type="chain" id="PRO_1000009643" description="Phosphoglycerate kinase">
    <location>
        <begin position="1"/>
        <end position="397"/>
    </location>
</feature>
<feature type="binding site" evidence="1">
    <location>
        <begin position="25"/>
        <end position="27"/>
    </location>
    <ligand>
        <name>substrate</name>
    </ligand>
</feature>
<feature type="binding site" evidence="1">
    <location>
        <position position="41"/>
    </location>
    <ligand>
        <name>substrate</name>
    </ligand>
</feature>
<feature type="binding site" evidence="1">
    <location>
        <begin position="64"/>
        <end position="67"/>
    </location>
    <ligand>
        <name>substrate</name>
    </ligand>
</feature>
<feature type="binding site" evidence="1">
    <location>
        <position position="118"/>
    </location>
    <ligand>
        <name>substrate</name>
    </ligand>
</feature>
<feature type="binding site" evidence="1">
    <location>
        <position position="151"/>
    </location>
    <ligand>
        <name>substrate</name>
    </ligand>
</feature>
<feature type="binding site" evidence="1">
    <location>
        <position position="202"/>
    </location>
    <ligand>
        <name>ATP</name>
        <dbReference type="ChEBI" id="CHEBI:30616"/>
    </ligand>
</feature>
<feature type="binding site" evidence="1">
    <location>
        <position position="324"/>
    </location>
    <ligand>
        <name>ATP</name>
        <dbReference type="ChEBI" id="CHEBI:30616"/>
    </ligand>
</feature>
<feature type="binding site" evidence="1">
    <location>
        <begin position="350"/>
        <end position="353"/>
    </location>
    <ligand>
        <name>ATP</name>
        <dbReference type="ChEBI" id="CHEBI:30616"/>
    </ligand>
</feature>
<evidence type="ECO:0000255" key="1">
    <source>
        <dbReference type="HAMAP-Rule" id="MF_00145"/>
    </source>
</evidence>
<accession>Q21S63</accession>
<dbReference type="EC" id="2.7.2.3" evidence="1"/>
<dbReference type="EMBL" id="CP000267">
    <property type="protein sequence ID" value="ABD71390.1"/>
    <property type="molecule type" value="Genomic_DNA"/>
</dbReference>
<dbReference type="RefSeq" id="WP_011465953.1">
    <property type="nucleotide sequence ID" value="NC_007908.1"/>
</dbReference>
<dbReference type="SMR" id="Q21S63"/>
<dbReference type="STRING" id="338969.Rfer_3690"/>
<dbReference type="KEGG" id="rfr:Rfer_3690"/>
<dbReference type="eggNOG" id="COG0126">
    <property type="taxonomic scope" value="Bacteria"/>
</dbReference>
<dbReference type="HOGENOM" id="CLU_025427_0_2_4"/>
<dbReference type="OrthoDB" id="9808460at2"/>
<dbReference type="UniPathway" id="UPA00109">
    <property type="reaction ID" value="UER00185"/>
</dbReference>
<dbReference type="Proteomes" id="UP000008332">
    <property type="component" value="Chromosome"/>
</dbReference>
<dbReference type="GO" id="GO:0005829">
    <property type="term" value="C:cytosol"/>
    <property type="evidence" value="ECO:0007669"/>
    <property type="project" value="TreeGrafter"/>
</dbReference>
<dbReference type="GO" id="GO:0043531">
    <property type="term" value="F:ADP binding"/>
    <property type="evidence" value="ECO:0007669"/>
    <property type="project" value="TreeGrafter"/>
</dbReference>
<dbReference type="GO" id="GO:0005524">
    <property type="term" value="F:ATP binding"/>
    <property type="evidence" value="ECO:0007669"/>
    <property type="project" value="UniProtKB-KW"/>
</dbReference>
<dbReference type="GO" id="GO:0004618">
    <property type="term" value="F:phosphoglycerate kinase activity"/>
    <property type="evidence" value="ECO:0007669"/>
    <property type="project" value="UniProtKB-UniRule"/>
</dbReference>
<dbReference type="GO" id="GO:0006094">
    <property type="term" value="P:gluconeogenesis"/>
    <property type="evidence" value="ECO:0007669"/>
    <property type="project" value="TreeGrafter"/>
</dbReference>
<dbReference type="GO" id="GO:0006096">
    <property type="term" value="P:glycolytic process"/>
    <property type="evidence" value="ECO:0007669"/>
    <property type="project" value="UniProtKB-UniRule"/>
</dbReference>
<dbReference type="FunFam" id="3.40.50.1260:FF:000001">
    <property type="entry name" value="Phosphoglycerate kinase"/>
    <property type="match status" value="1"/>
</dbReference>
<dbReference type="FunFam" id="3.40.50.1260:FF:000002">
    <property type="entry name" value="Phosphoglycerate kinase"/>
    <property type="match status" value="1"/>
</dbReference>
<dbReference type="Gene3D" id="3.40.50.1260">
    <property type="entry name" value="Phosphoglycerate kinase, N-terminal domain"/>
    <property type="match status" value="2"/>
</dbReference>
<dbReference type="HAMAP" id="MF_00145">
    <property type="entry name" value="Phosphoglyc_kinase"/>
    <property type="match status" value="1"/>
</dbReference>
<dbReference type="InterPro" id="IPR001576">
    <property type="entry name" value="Phosphoglycerate_kinase"/>
</dbReference>
<dbReference type="InterPro" id="IPR015911">
    <property type="entry name" value="Phosphoglycerate_kinase_CS"/>
</dbReference>
<dbReference type="InterPro" id="IPR015824">
    <property type="entry name" value="Phosphoglycerate_kinase_N"/>
</dbReference>
<dbReference type="InterPro" id="IPR036043">
    <property type="entry name" value="Phosphoglycerate_kinase_sf"/>
</dbReference>
<dbReference type="PANTHER" id="PTHR11406">
    <property type="entry name" value="PHOSPHOGLYCERATE KINASE"/>
    <property type="match status" value="1"/>
</dbReference>
<dbReference type="PANTHER" id="PTHR11406:SF23">
    <property type="entry name" value="PHOSPHOGLYCERATE KINASE 1, CHLOROPLASTIC-RELATED"/>
    <property type="match status" value="1"/>
</dbReference>
<dbReference type="Pfam" id="PF00162">
    <property type="entry name" value="PGK"/>
    <property type="match status" value="1"/>
</dbReference>
<dbReference type="PIRSF" id="PIRSF000724">
    <property type="entry name" value="Pgk"/>
    <property type="match status" value="1"/>
</dbReference>
<dbReference type="PRINTS" id="PR00477">
    <property type="entry name" value="PHGLYCKINASE"/>
</dbReference>
<dbReference type="SUPFAM" id="SSF53748">
    <property type="entry name" value="Phosphoglycerate kinase"/>
    <property type="match status" value="1"/>
</dbReference>
<dbReference type="PROSITE" id="PS00111">
    <property type="entry name" value="PGLYCERATE_KINASE"/>
    <property type="match status" value="1"/>
</dbReference>
<protein>
    <recommendedName>
        <fullName evidence="1">Phosphoglycerate kinase</fullName>
        <ecNumber evidence="1">2.7.2.3</ecNumber>
    </recommendedName>
</protein>
<proteinExistence type="inferred from homology"/>
<comment type="catalytic activity">
    <reaction evidence="1">
        <text>(2R)-3-phosphoglycerate + ATP = (2R)-3-phospho-glyceroyl phosphate + ADP</text>
        <dbReference type="Rhea" id="RHEA:14801"/>
        <dbReference type="ChEBI" id="CHEBI:30616"/>
        <dbReference type="ChEBI" id="CHEBI:57604"/>
        <dbReference type="ChEBI" id="CHEBI:58272"/>
        <dbReference type="ChEBI" id="CHEBI:456216"/>
        <dbReference type="EC" id="2.7.2.3"/>
    </reaction>
</comment>
<comment type="pathway">
    <text evidence="1">Carbohydrate degradation; glycolysis; pyruvate from D-glyceraldehyde 3-phosphate: step 2/5.</text>
</comment>
<comment type="subunit">
    <text evidence="1">Monomer.</text>
</comment>
<comment type="subcellular location">
    <subcellularLocation>
        <location evidence="1">Cytoplasm</location>
    </subcellularLocation>
</comment>
<comment type="similarity">
    <text evidence="1">Belongs to the phosphoglycerate kinase family.</text>
</comment>